<accession>Q9BDP4</accession>
<accession>Q9N0Q1</accession>
<reference key="1">
    <citation type="submission" date="2000-04" db="EMBL/GenBank/DDBJ databases">
        <title>Identification of canine mRNA for vacuolar-proton ATPase subunit (ATP6H) mRNA.</title>
        <authorList>
            <person name="Shah A.B."/>
            <person name="Gitschier J."/>
        </authorList>
    </citation>
    <scope>NUCLEOTIDE SEQUENCE [MRNA]</scope>
</reference>
<reference key="2">
    <citation type="journal article" date="2001" name="Mamm. Genome">
        <title>ATP6H, a subunit of vacuolar ATPase involved in metal transport: evaluation in canine copper toxicosis.</title>
        <authorList>
            <person name="Nanji M."/>
            <person name="Coronado V.A."/>
            <person name="Cox D.W."/>
        </authorList>
    </citation>
    <scope>NUCLEOTIDE SEQUENCE [MRNA]</scope>
</reference>
<evidence type="ECO:0000250" key="1">
    <source>
        <dbReference type="UniProtKB" id="O15342"/>
    </source>
</evidence>
<evidence type="ECO:0000250" key="2">
    <source>
        <dbReference type="UniProtKB" id="Q2KIB5"/>
    </source>
</evidence>
<evidence type="ECO:0000255" key="3"/>
<evidence type="ECO:0000305" key="4"/>
<gene>
    <name type="primary">ATP6V0E1</name>
    <name type="synonym">ATP6H</name>
    <name type="synonym">ATP6V0E</name>
</gene>
<name>VA0E1_CANLF</name>
<sequence>MAYHGLTVPLIVMSVFWGFVGFCVPWFIPKGPNRGVIITMLVTCSVCCYLFWLIAILAQLNPLFGPQLKNETIWYLKYHWP</sequence>
<comment type="function">
    <text evidence="1 2">Subunit of the V0 complex of vacuolar(H+)-ATPase (V-ATPase), a multisubunit enzyme composed of a peripheral complex (V1) that hydrolyzes ATP and a membrane integral complex (V0) that translocates protons (By similarity). V-ATPase is responsible for acidifying and maintaining the pH of intracellular compartments and in some cell types, is targeted to the plasma membrane, where it is responsible for acidifying the extracellular environment (By similarity).</text>
</comment>
<comment type="subunit">
    <text evidence="1">V-ATPase is a heteromultimeric enzyme made up of two complexes: the ATP-hydrolytic V1 complex and the proton translocation V0 complex (By similarity). The V1 complex consists of three catalytic AB heterodimers that form a heterohexamer, three peripheral stalks each consisting of EG heterodimers, one central rotor including subunits D and F, and the regulatory subunits C and H (By similarity). The proton translocation complex V0 consists of the proton transport subunit a, a ring of proteolipid subunits c9c'', rotary subunit d, subunits e and f, and the accessory subunits ATP6AP1/Ac45 and ATP6AP2/PRR (By similarity).</text>
</comment>
<comment type="subcellular location">
    <subcellularLocation>
        <location evidence="3">Membrane</location>
        <topology evidence="3">Multi-pass membrane protein</topology>
    </subcellularLocation>
</comment>
<comment type="similarity">
    <text evidence="4">Belongs to the V-ATPase e1/e2 subunit family.</text>
</comment>
<keyword id="KW-0325">Glycoprotein</keyword>
<keyword id="KW-0375">Hydrogen ion transport</keyword>
<keyword id="KW-0406">Ion transport</keyword>
<keyword id="KW-0472">Membrane</keyword>
<keyword id="KW-1185">Reference proteome</keyword>
<keyword id="KW-0812">Transmembrane</keyword>
<keyword id="KW-1133">Transmembrane helix</keyword>
<keyword id="KW-0813">Transport</keyword>
<feature type="chain" id="PRO_0000071739" description="V-type proton ATPase subunit e 1">
    <location>
        <begin position="1"/>
        <end position="81"/>
    </location>
</feature>
<feature type="topological domain" description="Lumenal" evidence="4">
    <location>
        <begin position="1"/>
        <end position="7"/>
    </location>
</feature>
<feature type="transmembrane region" description="Helical" evidence="3">
    <location>
        <begin position="8"/>
        <end position="28"/>
    </location>
</feature>
<feature type="topological domain" description="Cytoplasmic" evidence="4">
    <location>
        <begin position="29"/>
        <end position="35"/>
    </location>
</feature>
<feature type="transmembrane region" description="Helical" evidence="3">
    <location>
        <begin position="36"/>
        <end position="56"/>
    </location>
</feature>
<feature type="topological domain" description="Lumenal" evidence="4">
    <location>
        <begin position="57"/>
        <end position="81"/>
    </location>
</feature>
<feature type="glycosylation site" description="N-linked (GlcNAc...) asparagine" evidence="3">
    <location>
        <position position="70"/>
    </location>
</feature>
<feature type="sequence conflict" description="In Ref. 1; AAF71753." evidence="4" ref="1">
    <original>K</original>
    <variation>R</variation>
    <location>
        <position position="77"/>
    </location>
</feature>
<proteinExistence type="inferred from homology"/>
<organism>
    <name type="scientific">Canis lupus familiaris</name>
    <name type="common">Dog</name>
    <name type="synonym">Canis familiaris</name>
    <dbReference type="NCBI Taxonomy" id="9615"/>
    <lineage>
        <taxon>Eukaryota</taxon>
        <taxon>Metazoa</taxon>
        <taxon>Chordata</taxon>
        <taxon>Craniata</taxon>
        <taxon>Vertebrata</taxon>
        <taxon>Euteleostomi</taxon>
        <taxon>Mammalia</taxon>
        <taxon>Eutheria</taxon>
        <taxon>Laurasiatheria</taxon>
        <taxon>Carnivora</taxon>
        <taxon>Caniformia</taxon>
        <taxon>Canidae</taxon>
        <taxon>Canis</taxon>
    </lineage>
</organism>
<dbReference type="EMBL" id="AF258614">
    <property type="protein sequence ID" value="AAF71753.1"/>
    <property type="molecule type" value="mRNA"/>
</dbReference>
<dbReference type="EMBL" id="AF343440">
    <property type="protein sequence ID" value="AAK28556.1"/>
    <property type="molecule type" value="mRNA"/>
</dbReference>
<dbReference type="RefSeq" id="NP_001003128.1">
    <property type="nucleotide sequence ID" value="NM_001003128.1"/>
</dbReference>
<dbReference type="SMR" id="Q9BDP4"/>
<dbReference type="FunCoup" id="Q9BDP4">
    <property type="interactions" value="676"/>
</dbReference>
<dbReference type="STRING" id="9615.ENSCAFP00000039612"/>
<dbReference type="GlyCosmos" id="Q9BDP4">
    <property type="glycosylation" value="1 site, No reported glycans"/>
</dbReference>
<dbReference type="PaxDb" id="9612-ENSCAFP00000039612"/>
<dbReference type="GeneID" id="403729"/>
<dbReference type="KEGG" id="cfa:403729"/>
<dbReference type="CTD" id="8992"/>
<dbReference type="eggNOG" id="KOG3500">
    <property type="taxonomic scope" value="Eukaryota"/>
</dbReference>
<dbReference type="InParanoid" id="Q9BDP4"/>
<dbReference type="OrthoDB" id="1508846at2759"/>
<dbReference type="Proteomes" id="UP000002254">
    <property type="component" value="Unplaced"/>
</dbReference>
<dbReference type="Proteomes" id="UP000694429">
    <property type="component" value="Unplaced"/>
</dbReference>
<dbReference type="Proteomes" id="UP000694542">
    <property type="component" value="Unplaced"/>
</dbReference>
<dbReference type="Proteomes" id="UP000805418">
    <property type="component" value="Unplaced"/>
</dbReference>
<dbReference type="GO" id="GO:0033179">
    <property type="term" value="C:proton-transporting V-type ATPase, V0 domain"/>
    <property type="evidence" value="ECO:0007669"/>
    <property type="project" value="InterPro"/>
</dbReference>
<dbReference type="GO" id="GO:0046961">
    <property type="term" value="F:proton-transporting ATPase activity, rotational mechanism"/>
    <property type="evidence" value="ECO:0007669"/>
    <property type="project" value="InterPro"/>
</dbReference>
<dbReference type="GO" id="GO:0055085">
    <property type="term" value="P:transmembrane transport"/>
    <property type="evidence" value="ECO:0000318"/>
    <property type="project" value="GO_Central"/>
</dbReference>
<dbReference type="InterPro" id="IPR008389">
    <property type="entry name" value="ATPase_V0-cplx_e1/e2_su"/>
</dbReference>
<dbReference type="InterPro" id="IPR017385">
    <property type="entry name" value="ATPase_V0-cplx_e1/e2_su_met"/>
</dbReference>
<dbReference type="PANTHER" id="PTHR12263:SF5">
    <property type="entry name" value="V-TYPE PROTON ATPASE SUBUNIT E 1"/>
    <property type="match status" value="1"/>
</dbReference>
<dbReference type="PANTHER" id="PTHR12263">
    <property type="entry name" value="VACUOLAR ATP SYNTHASE SUBUNIT H"/>
    <property type="match status" value="1"/>
</dbReference>
<dbReference type="Pfam" id="PF05493">
    <property type="entry name" value="ATP_synt_H"/>
    <property type="match status" value="1"/>
</dbReference>
<dbReference type="PIRSF" id="PIRSF038097">
    <property type="entry name" value="V-ATP_synth_e1/e2"/>
    <property type="match status" value="1"/>
</dbReference>
<protein>
    <recommendedName>
        <fullName>V-type proton ATPase subunit e 1</fullName>
        <shortName>V-ATPase subunit e 1</shortName>
    </recommendedName>
    <alternativeName>
        <fullName>V-ATPase 9.2 kDa membrane accessory protein</fullName>
    </alternativeName>
    <alternativeName>
        <fullName>V-ATPase M9.2 subunit</fullName>
    </alternativeName>
    <alternativeName>
        <fullName>Vacuolar proton pump subunit e 1</fullName>
    </alternativeName>
</protein>